<reference key="1">
    <citation type="journal article" date="2000" name="Nature">
        <title>Complete DNA sequence of a serogroup A strain of Neisseria meningitidis Z2491.</title>
        <authorList>
            <person name="Parkhill J."/>
            <person name="Achtman M."/>
            <person name="James K.D."/>
            <person name="Bentley S.D."/>
            <person name="Churcher C.M."/>
            <person name="Klee S.R."/>
            <person name="Morelli G."/>
            <person name="Basham D."/>
            <person name="Brown D."/>
            <person name="Chillingworth T."/>
            <person name="Davies R.M."/>
            <person name="Davis P."/>
            <person name="Devlin K."/>
            <person name="Feltwell T."/>
            <person name="Hamlin N."/>
            <person name="Holroyd S."/>
            <person name="Jagels K."/>
            <person name="Leather S."/>
            <person name="Moule S."/>
            <person name="Mungall K.L."/>
            <person name="Quail M.A."/>
            <person name="Rajandream M.A."/>
            <person name="Rutherford K.M."/>
            <person name="Simmonds M."/>
            <person name="Skelton J."/>
            <person name="Whitehead S."/>
            <person name="Spratt B.G."/>
            <person name="Barrell B.G."/>
        </authorList>
    </citation>
    <scope>NUCLEOTIDE SEQUENCE [LARGE SCALE GENOMIC DNA]</scope>
    <source>
        <strain>DSM 15465 / Z2491</strain>
    </source>
</reference>
<sequence length="117" mass="12798">MDKHTTRLRRARKTRARIADLKMVRLCVFRSNNHIYAQVISAEGDKVLAQASTLEAEVRGSLKSGSNVEAAAIVGKRIAEKAKAAGVEKVAFDRSGFQYHGRVKALAEAARENGLSF</sequence>
<comment type="function">
    <text evidence="1">This is one of the proteins that bind and probably mediate the attachment of the 5S RNA into the large ribosomal subunit, where it forms part of the central protuberance.</text>
</comment>
<comment type="subunit">
    <text evidence="1">Part of the 50S ribosomal subunit; part of the 5S rRNA/L5/L18/L25 subcomplex. Contacts the 5S and 23S rRNAs.</text>
</comment>
<comment type="similarity">
    <text evidence="1">Belongs to the universal ribosomal protein uL18 family.</text>
</comment>
<keyword id="KW-0687">Ribonucleoprotein</keyword>
<keyword id="KW-0689">Ribosomal protein</keyword>
<keyword id="KW-0694">RNA-binding</keyword>
<keyword id="KW-0699">rRNA-binding</keyword>
<organism>
    <name type="scientific">Neisseria meningitidis serogroup A / serotype 4A (strain DSM 15465 / Z2491)</name>
    <dbReference type="NCBI Taxonomy" id="122587"/>
    <lineage>
        <taxon>Bacteria</taxon>
        <taxon>Pseudomonadati</taxon>
        <taxon>Pseudomonadota</taxon>
        <taxon>Betaproteobacteria</taxon>
        <taxon>Neisseriales</taxon>
        <taxon>Neisseriaceae</taxon>
        <taxon>Neisseria</taxon>
    </lineage>
</organism>
<accession>Q9JQQ6</accession>
<accession>A1INX4</accession>
<gene>
    <name evidence="1" type="primary">rplR</name>
    <name type="ordered locus">NMA0113</name>
</gene>
<feature type="chain" id="PRO_0000131307" description="Large ribosomal subunit protein uL18">
    <location>
        <begin position="1"/>
        <end position="117"/>
    </location>
</feature>
<protein>
    <recommendedName>
        <fullName evidence="1">Large ribosomal subunit protein uL18</fullName>
    </recommendedName>
    <alternativeName>
        <fullName evidence="2">50S ribosomal protein L18</fullName>
    </alternativeName>
</protein>
<evidence type="ECO:0000255" key="1">
    <source>
        <dbReference type="HAMAP-Rule" id="MF_01337"/>
    </source>
</evidence>
<evidence type="ECO:0000305" key="2"/>
<dbReference type="EMBL" id="AL157959">
    <property type="protein sequence ID" value="CAM07431.1"/>
    <property type="molecule type" value="Genomic_DNA"/>
</dbReference>
<dbReference type="PIR" id="H81232">
    <property type="entry name" value="H81232"/>
</dbReference>
<dbReference type="RefSeq" id="WP_002215441.1">
    <property type="nucleotide sequence ID" value="NC_003116.1"/>
</dbReference>
<dbReference type="SMR" id="Q9JQQ6"/>
<dbReference type="EnsemblBacteria" id="CAM07431">
    <property type="protein sequence ID" value="CAM07431"/>
    <property type="gene ID" value="NMA0113"/>
</dbReference>
<dbReference type="GeneID" id="93387233"/>
<dbReference type="KEGG" id="nma:NMA0113"/>
<dbReference type="HOGENOM" id="CLU_098841_0_1_4"/>
<dbReference type="Proteomes" id="UP000000626">
    <property type="component" value="Chromosome"/>
</dbReference>
<dbReference type="GO" id="GO:0022625">
    <property type="term" value="C:cytosolic large ribosomal subunit"/>
    <property type="evidence" value="ECO:0007669"/>
    <property type="project" value="TreeGrafter"/>
</dbReference>
<dbReference type="GO" id="GO:0008097">
    <property type="term" value="F:5S rRNA binding"/>
    <property type="evidence" value="ECO:0007669"/>
    <property type="project" value="TreeGrafter"/>
</dbReference>
<dbReference type="GO" id="GO:0003735">
    <property type="term" value="F:structural constituent of ribosome"/>
    <property type="evidence" value="ECO:0007669"/>
    <property type="project" value="InterPro"/>
</dbReference>
<dbReference type="GO" id="GO:0006412">
    <property type="term" value="P:translation"/>
    <property type="evidence" value="ECO:0007669"/>
    <property type="project" value="UniProtKB-UniRule"/>
</dbReference>
<dbReference type="CDD" id="cd00432">
    <property type="entry name" value="Ribosomal_L18_L5e"/>
    <property type="match status" value="1"/>
</dbReference>
<dbReference type="FunFam" id="3.30.420.100:FF:000001">
    <property type="entry name" value="50S ribosomal protein L18"/>
    <property type="match status" value="1"/>
</dbReference>
<dbReference type="Gene3D" id="3.30.420.100">
    <property type="match status" value="1"/>
</dbReference>
<dbReference type="HAMAP" id="MF_01337_B">
    <property type="entry name" value="Ribosomal_uL18_B"/>
    <property type="match status" value="1"/>
</dbReference>
<dbReference type="InterPro" id="IPR004389">
    <property type="entry name" value="Ribosomal_uL18_bac-type"/>
</dbReference>
<dbReference type="InterPro" id="IPR005484">
    <property type="entry name" value="Ribosomal_uL18_bac/euk"/>
</dbReference>
<dbReference type="NCBIfam" id="TIGR00060">
    <property type="entry name" value="L18_bact"/>
    <property type="match status" value="1"/>
</dbReference>
<dbReference type="PANTHER" id="PTHR12899">
    <property type="entry name" value="39S RIBOSOMAL PROTEIN L18, MITOCHONDRIAL"/>
    <property type="match status" value="1"/>
</dbReference>
<dbReference type="PANTHER" id="PTHR12899:SF3">
    <property type="entry name" value="LARGE RIBOSOMAL SUBUNIT PROTEIN UL18M"/>
    <property type="match status" value="1"/>
</dbReference>
<dbReference type="Pfam" id="PF00861">
    <property type="entry name" value="Ribosomal_L18p"/>
    <property type="match status" value="1"/>
</dbReference>
<dbReference type="SUPFAM" id="SSF53137">
    <property type="entry name" value="Translational machinery components"/>
    <property type="match status" value="1"/>
</dbReference>
<proteinExistence type="inferred from homology"/>
<name>RL18_NEIMA</name>